<sequence length="632" mass="71182">MAHETMSFQAEVKQLLHLMIHSLYSNKEIFLRELVSNASDAADKLRFEGLADNALYENDPNLRIRIGYDKAARTITIDDNGIGMSRDEAIANLGTIARSGTKEFFTKLSGDQQKDAALIGQFGVGFYSGFIVADKITVETRRAGLPANEAVRWESAGEGDFTIDAIERAQRGTTITLHLREGEDDLLSSHRLKSIIQKYSDHIALPILMRKEEWDQEKGEMVLKDEDETVNQASALWTRSKSDVTDEQYTQFYQHIAHDHQDPLTWTHNRVEGRSEYTQLLFVPAHAPFDLWNRDYRGGLKLYVKRVFIMDDAEQLLPQYLRFVKGVVDSADLPLNVSREILQESRDVKAIREGVTKRALSMLEELANAEDDAGKEKYKTFWGAFGQVLKEGLGEDHANRERIAKLLRFASTHGDTDAQDVSLADYVSRMKPEQSKIYYVTADTWQAAKNSPHLEVFRKKGVEVLLLTDRVDEWMLSFLHEFDGKPLASVARGDLDLGELNDEEKKAQEQAGEAIKPVVEKMKEALGDKVKEVRVTFRLTDSPSCLVADDNDMSGYLQRMLKAAGQNAPAMQPILEINPEHALVKQLNADSADFGDWCHLLFDQALLAEGGMLDDPASFVKRTNALLLSRAA</sequence>
<gene>
    <name evidence="1" type="primary">htpG</name>
    <name type="ordered locus">Bcen_1735</name>
</gene>
<protein>
    <recommendedName>
        <fullName evidence="1">Chaperone protein HtpG</fullName>
    </recommendedName>
    <alternativeName>
        <fullName evidence="1">Heat shock protein HtpG</fullName>
    </alternativeName>
    <alternativeName>
        <fullName evidence="1">High temperature protein G</fullName>
    </alternativeName>
</protein>
<proteinExistence type="inferred from homology"/>
<dbReference type="EMBL" id="CP000378">
    <property type="protein sequence ID" value="ABF76638.1"/>
    <property type="molecule type" value="Genomic_DNA"/>
</dbReference>
<dbReference type="SMR" id="Q1BUR7"/>
<dbReference type="HOGENOM" id="CLU_006684_3_0_4"/>
<dbReference type="GO" id="GO:0005737">
    <property type="term" value="C:cytoplasm"/>
    <property type="evidence" value="ECO:0007669"/>
    <property type="project" value="UniProtKB-SubCell"/>
</dbReference>
<dbReference type="GO" id="GO:0005524">
    <property type="term" value="F:ATP binding"/>
    <property type="evidence" value="ECO:0007669"/>
    <property type="project" value="UniProtKB-UniRule"/>
</dbReference>
<dbReference type="GO" id="GO:0016887">
    <property type="term" value="F:ATP hydrolysis activity"/>
    <property type="evidence" value="ECO:0007669"/>
    <property type="project" value="InterPro"/>
</dbReference>
<dbReference type="GO" id="GO:0140662">
    <property type="term" value="F:ATP-dependent protein folding chaperone"/>
    <property type="evidence" value="ECO:0007669"/>
    <property type="project" value="InterPro"/>
</dbReference>
<dbReference type="GO" id="GO:0051082">
    <property type="term" value="F:unfolded protein binding"/>
    <property type="evidence" value="ECO:0007669"/>
    <property type="project" value="UniProtKB-UniRule"/>
</dbReference>
<dbReference type="CDD" id="cd16927">
    <property type="entry name" value="HATPase_Hsp90-like"/>
    <property type="match status" value="1"/>
</dbReference>
<dbReference type="FunFam" id="3.30.230.80:FF:000002">
    <property type="entry name" value="Molecular chaperone HtpG"/>
    <property type="match status" value="1"/>
</dbReference>
<dbReference type="FunFam" id="3.30.565.10:FF:000009">
    <property type="entry name" value="Molecular chaperone HtpG"/>
    <property type="match status" value="1"/>
</dbReference>
<dbReference type="Gene3D" id="3.30.230.80">
    <property type="match status" value="1"/>
</dbReference>
<dbReference type="Gene3D" id="3.40.50.11260">
    <property type="match status" value="1"/>
</dbReference>
<dbReference type="Gene3D" id="1.20.120.790">
    <property type="entry name" value="Heat shock protein 90, C-terminal domain"/>
    <property type="match status" value="1"/>
</dbReference>
<dbReference type="Gene3D" id="3.30.565.10">
    <property type="entry name" value="Histidine kinase-like ATPase, C-terminal domain"/>
    <property type="match status" value="1"/>
</dbReference>
<dbReference type="HAMAP" id="MF_00505">
    <property type="entry name" value="HSP90"/>
    <property type="match status" value="1"/>
</dbReference>
<dbReference type="InterPro" id="IPR036890">
    <property type="entry name" value="HATPase_C_sf"/>
</dbReference>
<dbReference type="InterPro" id="IPR019805">
    <property type="entry name" value="Heat_shock_protein_90_CS"/>
</dbReference>
<dbReference type="InterPro" id="IPR037196">
    <property type="entry name" value="HSP90_C"/>
</dbReference>
<dbReference type="InterPro" id="IPR001404">
    <property type="entry name" value="Hsp90_fam"/>
</dbReference>
<dbReference type="InterPro" id="IPR020575">
    <property type="entry name" value="Hsp90_N"/>
</dbReference>
<dbReference type="InterPro" id="IPR020568">
    <property type="entry name" value="Ribosomal_Su5_D2-typ_SF"/>
</dbReference>
<dbReference type="NCBIfam" id="NF003555">
    <property type="entry name" value="PRK05218.1"/>
    <property type="match status" value="1"/>
</dbReference>
<dbReference type="PANTHER" id="PTHR11528">
    <property type="entry name" value="HEAT SHOCK PROTEIN 90 FAMILY MEMBER"/>
    <property type="match status" value="1"/>
</dbReference>
<dbReference type="Pfam" id="PF13589">
    <property type="entry name" value="HATPase_c_3"/>
    <property type="match status" value="1"/>
</dbReference>
<dbReference type="Pfam" id="PF00183">
    <property type="entry name" value="HSP90"/>
    <property type="match status" value="1"/>
</dbReference>
<dbReference type="PIRSF" id="PIRSF002583">
    <property type="entry name" value="Hsp90"/>
    <property type="match status" value="1"/>
</dbReference>
<dbReference type="PRINTS" id="PR00775">
    <property type="entry name" value="HEATSHOCK90"/>
</dbReference>
<dbReference type="SMART" id="SM00387">
    <property type="entry name" value="HATPase_c"/>
    <property type="match status" value="1"/>
</dbReference>
<dbReference type="SUPFAM" id="SSF55874">
    <property type="entry name" value="ATPase domain of HSP90 chaperone/DNA topoisomerase II/histidine kinase"/>
    <property type="match status" value="1"/>
</dbReference>
<dbReference type="SUPFAM" id="SSF110942">
    <property type="entry name" value="HSP90 C-terminal domain"/>
    <property type="match status" value="1"/>
</dbReference>
<dbReference type="SUPFAM" id="SSF54211">
    <property type="entry name" value="Ribosomal protein S5 domain 2-like"/>
    <property type="match status" value="1"/>
</dbReference>
<dbReference type="PROSITE" id="PS00298">
    <property type="entry name" value="HSP90"/>
    <property type="match status" value="1"/>
</dbReference>
<organism>
    <name type="scientific">Burkholderia orbicola (strain AU 1054)</name>
    <dbReference type="NCBI Taxonomy" id="331271"/>
    <lineage>
        <taxon>Bacteria</taxon>
        <taxon>Pseudomonadati</taxon>
        <taxon>Pseudomonadota</taxon>
        <taxon>Betaproteobacteria</taxon>
        <taxon>Burkholderiales</taxon>
        <taxon>Burkholderiaceae</taxon>
        <taxon>Burkholderia</taxon>
        <taxon>Burkholderia cepacia complex</taxon>
        <taxon>Burkholderia orbicola</taxon>
    </lineage>
</organism>
<accession>Q1BUR7</accession>
<comment type="function">
    <text evidence="1">Molecular chaperone. Has ATPase activity.</text>
</comment>
<comment type="subunit">
    <text evidence="1">Homodimer.</text>
</comment>
<comment type="subcellular location">
    <subcellularLocation>
        <location evidence="1">Cytoplasm</location>
    </subcellularLocation>
</comment>
<comment type="similarity">
    <text evidence="1">Belongs to the heat shock protein 90 family.</text>
</comment>
<reference key="1">
    <citation type="submission" date="2006-05" db="EMBL/GenBank/DDBJ databases">
        <title>Complete sequence of chromosome 1 of Burkholderia cenocepacia AU 1054.</title>
        <authorList>
            <consortium name="US DOE Joint Genome Institute"/>
            <person name="Copeland A."/>
            <person name="Lucas S."/>
            <person name="Lapidus A."/>
            <person name="Barry K."/>
            <person name="Detter J.C."/>
            <person name="Glavina del Rio T."/>
            <person name="Hammon N."/>
            <person name="Israni S."/>
            <person name="Dalin E."/>
            <person name="Tice H."/>
            <person name="Pitluck S."/>
            <person name="Chain P."/>
            <person name="Malfatti S."/>
            <person name="Shin M."/>
            <person name="Vergez L."/>
            <person name="Schmutz J."/>
            <person name="Larimer F."/>
            <person name="Land M."/>
            <person name="Hauser L."/>
            <person name="Kyrpides N."/>
            <person name="Lykidis A."/>
            <person name="LiPuma J.J."/>
            <person name="Konstantinidis K."/>
            <person name="Tiedje J.M."/>
            <person name="Richardson P."/>
        </authorList>
    </citation>
    <scope>NUCLEOTIDE SEQUENCE [LARGE SCALE GENOMIC DNA]</scope>
    <source>
        <strain>AU 1054</strain>
    </source>
</reference>
<feature type="chain" id="PRO_0000258504" description="Chaperone protein HtpG">
    <location>
        <begin position="1"/>
        <end position="632"/>
    </location>
</feature>
<feature type="region of interest" description="A; substrate-binding" evidence="1">
    <location>
        <begin position="1"/>
        <end position="339"/>
    </location>
</feature>
<feature type="region of interest" description="B" evidence="1">
    <location>
        <begin position="340"/>
        <end position="559"/>
    </location>
</feature>
<feature type="region of interest" description="C" evidence="1">
    <location>
        <begin position="560"/>
        <end position="632"/>
    </location>
</feature>
<evidence type="ECO:0000255" key="1">
    <source>
        <dbReference type="HAMAP-Rule" id="MF_00505"/>
    </source>
</evidence>
<name>HTPG_BURO1</name>
<keyword id="KW-0067">ATP-binding</keyword>
<keyword id="KW-0143">Chaperone</keyword>
<keyword id="KW-0963">Cytoplasm</keyword>
<keyword id="KW-0547">Nucleotide-binding</keyword>
<keyword id="KW-0346">Stress response</keyword>